<reference key="1">
    <citation type="journal article" date="2002" name="Genomics">
        <title>Identification and characterization of novel members of the CREG family, putative secreted glycoproteins expressed specifically in brain.</title>
        <authorList>
            <person name="Kunita R."/>
            <person name="Otomo A."/>
            <person name="Ikeda J.-E."/>
        </authorList>
    </citation>
    <scope>NUCLEOTIDE SEQUENCE [MRNA]</scope>
    <scope>SUBCELLULAR LOCATION</scope>
    <scope>TISSUE SPECIFICITY</scope>
    <scope>GLYCOSYLATION</scope>
    <scope>MUTAGENESIS OF 165-ASN-ASN-166</scope>
    <source>
        <tissue>Brain</tissue>
    </source>
</reference>
<reference key="2">
    <citation type="journal article" date="2004" name="Genome Res.">
        <title>The status, quality, and expansion of the NIH full-length cDNA project: the Mammalian Gene Collection (MGC).</title>
        <authorList>
            <consortium name="The MGC Project Team"/>
        </authorList>
    </citation>
    <scope>NUCLEOTIDE SEQUENCE [LARGE SCALE MRNA]</scope>
    <scope>VARIANT GLN-96</scope>
    <source>
        <tissue>Brain</tissue>
    </source>
</reference>
<reference key="3">
    <citation type="journal article" date="2004" name="Nat. Genet.">
        <title>Complete sequencing and characterization of 21,243 full-length human cDNAs.</title>
        <authorList>
            <person name="Ota T."/>
            <person name="Suzuki Y."/>
            <person name="Nishikawa T."/>
            <person name="Otsuki T."/>
            <person name="Sugiyama T."/>
            <person name="Irie R."/>
            <person name="Wakamatsu A."/>
            <person name="Hayashi K."/>
            <person name="Sato H."/>
            <person name="Nagai K."/>
            <person name="Kimura K."/>
            <person name="Makita H."/>
            <person name="Sekine M."/>
            <person name="Obayashi M."/>
            <person name="Nishi T."/>
            <person name="Shibahara T."/>
            <person name="Tanaka T."/>
            <person name="Ishii S."/>
            <person name="Yamamoto J."/>
            <person name="Saito K."/>
            <person name="Kawai Y."/>
            <person name="Isono Y."/>
            <person name="Nakamura Y."/>
            <person name="Nagahari K."/>
            <person name="Murakami K."/>
            <person name="Yasuda T."/>
            <person name="Iwayanagi T."/>
            <person name="Wagatsuma M."/>
            <person name="Shiratori A."/>
            <person name="Sudo H."/>
            <person name="Hosoiri T."/>
            <person name="Kaku Y."/>
            <person name="Kodaira H."/>
            <person name="Kondo H."/>
            <person name="Sugawara M."/>
            <person name="Takahashi M."/>
            <person name="Kanda K."/>
            <person name="Yokoi T."/>
            <person name="Furuya T."/>
            <person name="Kikkawa E."/>
            <person name="Omura Y."/>
            <person name="Abe K."/>
            <person name="Kamihara K."/>
            <person name="Katsuta N."/>
            <person name="Sato K."/>
            <person name="Tanikawa M."/>
            <person name="Yamazaki M."/>
            <person name="Ninomiya K."/>
            <person name="Ishibashi T."/>
            <person name="Yamashita H."/>
            <person name="Murakawa K."/>
            <person name="Fujimori K."/>
            <person name="Tanai H."/>
            <person name="Kimata M."/>
            <person name="Watanabe M."/>
            <person name="Hiraoka S."/>
            <person name="Chiba Y."/>
            <person name="Ishida S."/>
            <person name="Ono Y."/>
            <person name="Takiguchi S."/>
            <person name="Watanabe S."/>
            <person name="Yosida M."/>
            <person name="Hotuta T."/>
            <person name="Kusano J."/>
            <person name="Kanehori K."/>
            <person name="Takahashi-Fujii A."/>
            <person name="Hara H."/>
            <person name="Tanase T.-O."/>
            <person name="Nomura Y."/>
            <person name="Togiya S."/>
            <person name="Komai F."/>
            <person name="Hara R."/>
            <person name="Takeuchi K."/>
            <person name="Arita M."/>
            <person name="Imose N."/>
            <person name="Musashino K."/>
            <person name="Yuuki H."/>
            <person name="Oshima A."/>
            <person name="Sasaki N."/>
            <person name="Aotsuka S."/>
            <person name="Yoshikawa Y."/>
            <person name="Matsunawa H."/>
            <person name="Ichihara T."/>
            <person name="Shiohata N."/>
            <person name="Sano S."/>
            <person name="Moriya S."/>
            <person name="Momiyama H."/>
            <person name="Satoh N."/>
            <person name="Takami S."/>
            <person name="Terashima Y."/>
            <person name="Suzuki O."/>
            <person name="Nakagawa S."/>
            <person name="Senoh A."/>
            <person name="Mizoguchi H."/>
            <person name="Goto Y."/>
            <person name="Shimizu F."/>
            <person name="Wakebe H."/>
            <person name="Hishigaki H."/>
            <person name="Watanabe T."/>
            <person name="Sugiyama A."/>
            <person name="Takemoto M."/>
            <person name="Kawakami B."/>
            <person name="Yamazaki M."/>
            <person name="Watanabe K."/>
            <person name="Kumagai A."/>
            <person name="Itakura S."/>
            <person name="Fukuzumi Y."/>
            <person name="Fujimori Y."/>
            <person name="Komiyama M."/>
            <person name="Tashiro H."/>
            <person name="Tanigami A."/>
            <person name="Fujiwara T."/>
            <person name="Ono T."/>
            <person name="Yamada K."/>
            <person name="Fujii Y."/>
            <person name="Ozaki K."/>
            <person name="Hirao M."/>
            <person name="Ohmori Y."/>
            <person name="Kawabata A."/>
            <person name="Hikiji T."/>
            <person name="Kobatake N."/>
            <person name="Inagaki H."/>
            <person name="Ikema Y."/>
            <person name="Okamoto S."/>
            <person name="Okitani R."/>
            <person name="Kawakami T."/>
            <person name="Noguchi S."/>
            <person name="Itoh T."/>
            <person name="Shigeta K."/>
            <person name="Senba T."/>
            <person name="Matsumura K."/>
            <person name="Nakajima Y."/>
            <person name="Mizuno T."/>
            <person name="Morinaga M."/>
            <person name="Sasaki M."/>
            <person name="Togashi T."/>
            <person name="Oyama M."/>
            <person name="Hata H."/>
            <person name="Watanabe M."/>
            <person name="Komatsu T."/>
            <person name="Mizushima-Sugano J."/>
            <person name="Satoh T."/>
            <person name="Shirai Y."/>
            <person name="Takahashi Y."/>
            <person name="Nakagawa K."/>
            <person name="Okumura K."/>
            <person name="Nagase T."/>
            <person name="Nomura N."/>
            <person name="Kikuchi H."/>
            <person name="Masuho Y."/>
            <person name="Yamashita R."/>
            <person name="Nakai K."/>
            <person name="Yada T."/>
            <person name="Nakamura Y."/>
            <person name="Ohara O."/>
            <person name="Isogai T."/>
            <person name="Sugano S."/>
        </authorList>
    </citation>
    <scope>NUCLEOTIDE SEQUENCE [LARGE SCALE MRNA] OF 20-290</scope>
    <scope>VARIANT GLN-96</scope>
    <source>
        <tissue>Hippocampus</tissue>
    </source>
</reference>
<dbReference type="EMBL" id="AB046109">
    <property type="protein sequence ID" value="BAC22189.1"/>
    <property type="molecule type" value="mRNA"/>
</dbReference>
<dbReference type="EMBL" id="BC032949">
    <property type="protein sequence ID" value="AAH32949.2"/>
    <property type="molecule type" value="mRNA"/>
</dbReference>
<dbReference type="EMBL" id="BC047514">
    <property type="protein sequence ID" value="AAH47514.1"/>
    <property type="molecule type" value="mRNA"/>
</dbReference>
<dbReference type="EMBL" id="AK094970">
    <property type="protein sequence ID" value="BAC04464.1"/>
    <property type="status" value="ALT_INIT"/>
    <property type="molecule type" value="mRNA"/>
</dbReference>
<dbReference type="CCDS" id="CCDS2052.1"/>
<dbReference type="RefSeq" id="NP_722578.1">
    <property type="nucleotide sequence ID" value="NM_153836.4"/>
</dbReference>
<dbReference type="SMR" id="Q8IUH2"/>
<dbReference type="BioGRID" id="128325">
    <property type="interactions" value="15"/>
</dbReference>
<dbReference type="FunCoup" id="Q8IUH2">
    <property type="interactions" value="123"/>
</dbReference>
<dbReference type="IntAct" id="Q8IUH2">
    <property type="interactions" value="1"/>
</dbReference>
<dbReference type="STRING" id="9606.ENSP00000315203"/>
<dbReference type="GlyCosmos" id="Q8IUH2">
    <property type="glycosylation" value="2 sites, No reported glycans"/>
</dbReference>
<dbReference type="GlyGen" id="Q8IUH2">
    <property type="glycosylation" value="3 sites, 1 O-linked glycan (1 site)"/>
</dbReference>
<dbReference type="iPTMnet" id="Q8IUH2"/>
<dbReference type="PhosphoSitePlus" id="Q8IUH2"/>
<dbReference type="BioMuta" id="CREG2"/>
<dbReference type="DMDM" id="59797946"/>
<dbReference type="jPOST" id="Q8IUH2"/>
<dbReference type="MassIVE" id="Q8IUH2"/>
<dbReference type="PaxDb" id="9606-ENSP00000315203"/>
<dbReference type="PeptideAtlas" id="Q8IUH2"/>
<dbReference type="ProteomicsDB" id="70565"/>
<dbReference type="Antibodypedia" id="48936">
    <property type="antibodies" value="113 antibodies from 19 providers"/>
</dbReference>
<dbReference type="DNASU" id="200407"/>
<dbReference type="Ensembl" id="ENST00000324768.6">
    <property type="protein sequence ID" value="ENSP00000315203.4"/>
    <property type="gene ID" value="ENSG00000175874.10"/>
</dbReference>
<dbReference type="GeneID" id="200407"/>
<dbReference type="KEGG" id="hsa:200407"/>
<dbReference type="MANE-Select" id="ENST00000324768.6">
    <property type="protein sequence ID" value="ENSP00000315203.4"/>
    <property type="RefSeq nucleotide sequence ID" value="NM_153836.4"/>
    <property type="RefSeq protein sequence ID" value="NP_722578.1"/>
</dbReference>
<dbReference type="UCSC" id="uc002tba.3">
    <property type="organism name" value="human"/>
</dbReference>
<dbReference type="AGR" id="HGNC:14272"/>
<dbReference type="CTD" id="200407"/>
<dbReference type="DisGeNET" id="200407"/>
<dbReference type="GeneCards" id="CREG2"/>
<dbReference type="HGNC" id="HGNC:14272">
    <property type="gene designation" value="CREG2"/>
</dbReference>
<dbReference type="HPA" id="ENSG00000175874">
    <property type="expression patterns" value="Tissue enriched (brain)"/>
</dbReference>
<dbReference type="MIM" id="618540">
    <property type="type" value="gene"/>
</dbReference>
<dbReference type="neXtProt" id="NX_Q8IUH2"/>
<dbReference type="OpenTargets" id="ENSG00000175874"/>
<dbReference type="PharmGKB" id="PA134876243"/>
<dbReference type="VEuPathDB" id="HostDB:ENSG00000175874"/>
<dbReference type="eggNOG" id="KOG3374">
    <property type="taxonomic scope" value="Eukaryota"/>
</dbReference>
<dbReference type="GeneTree" id="ENSGT00390000005914"/>
<dbReference type="HOGENOM" id="CLU_083635_0_0_1"/>
<dbReference type="InParanoid" id="Q8IUH2"/>
<dbReference type="OMA" id="HASSWGC"/>
<dbReference type="OrthoDB" id="9869319at2759"/>
<dbReference type="PAN-GO" id="Q8IUH2">
    <property type="GO annotations" value="1 GO annotation based on evolutionary models"/>
</dbReference>
<dbReference type="PhylomeDB" id="Q8IUH2"/>
<dbReference type="TreeFam" id="TF324680"/>
<dbReference type="PathwayCommons" id="Q8IUH2"/>
<dbReference type="BioGRID-ORCS" id="200407">
    <property type="hits" value="15 hits in 1147 CRISPR screens"/>
</dbReference>
<dbReference type="ChiTaRS" id="CREG2">
    <property type="organism name" value="human"/>
</dbReference>
<dbReference type="GenomeRNAi" id="200407"/>
<dbReference type="Pharos" id="Q8IUH2">
    <property type="development level" value="Tdark"/>
</dbReference>
<dbReference type="PRO" id="PR:Q8IUH2"/>
<dbReference type="Proteomes" id="UP000005640">
    <property type="component" value="Chromosome 2"/>
</dbReference>
<dbReference type="RNAct" id="Q8IUH2">
    <property type="molecule type" value="protein"/>
</dbReference>
<dbReference type="Bgee" id="ENSG00000175874">
    <property type="expression patterns" value="Expressed in Brodmann (1909) area 46 and 125 other cell types or tissues"/>
</dbReference>
<dbReference type="GO" id="GO:0005783">
    <property type="term" value="C:endoplasmic reticulum"/>
    <property type="evidence" value="ECO:0007669"/>
    <property type="project" value="Ensembl"/>
</dbReference>
<dbReference type="GO" id="GO:0005615">
    <property type="term" value="C:extracellular space"/>
    <property type="evidence" value="ECO:0000318"/>
    <property type="project" value="GO_Central"/>
</dbReference>
<dbReference type="GO" id="GO:0005794">
    <property type="term" value="C:Golgi apparatus"/>
    <property type="evidence" value="ECO:0007669"/>
    <property type="project" value="Ensembl"/>
</dbReference>
<dbReference type="FunFam" id="2.30.110.10:FF:000004">
    <property type="entry name" value="Cellular repressor of E1A-stimulated genes 1"/>
    <property type="match status" value="1"/>
</dbReference>
<dbReference type="Gene3D" id="2.30.110.10">
    <property type="entry name" value="Electron Transport, Fmn-binding Protein, Chain A"/>
    <property type="match status" value="1"/>
</dbReference>
<dbReference type="InterPro" id="IPR014631">
    <property type="entry name" value="CREG"/>
</dbReference>
<dbReference type="InterPro" id="IPR055343">
    <property type="entry name" value="CREG_beta-barrel"/>
</dbReference>
<dbReference type="InterPro" id="IPR012349">
    <property type="entry name" value="Split_barrel_FMN-bd"/>
</dbReference>
<dbReference type="PANTHER" id="PTHR13343">
    <property type="entry name" value="CREG1 PROTEIN"/>
    <property type="match status" value="1"/>
</dbReference>
<dbReference type="PANTHER" id="PTHR13343:SF15">
    <property type="entry name" value="PROTEIN CREG2"/>
    <property type="match status" value="1"/>
</dbReference>
<dbReference type="Pfam" id="PF13883">
    <property type="entry name" value="CREG_beta-barrel"/>
    <property type="match status" value="1"/>
</dbReference>
<dbReference type="PIRSF" id="PIRSF036911">
    <property type="entry name" value="CREG"/>
    <property type="match status" value="1"/>
</dbReference>
<dbReference type="SUPFAM" id="SSF50475">
    <property type="entry name" value="FMN-binding split barrel"/>
    <property type="match status" value="1"/>
</dbReference>
<keyword id="KW-0325">Glycoprotein</keyword>
<keyword id="KW-1267">Proteomics identification</keyword>
<keyword id="KW-1185">Reference proteome</keyword>
<keyword id="KW-0964">Secreted</keyword>
<keyword id="KW-0732">Signal</keyword>
<sequence length="290" mass="32109">MSVRRGRRPARPGTRLSWLLCCSALLSPAAGYVIVSSVSWAVTNEVDEELDSASTEEAMPALLEDSGSIWQQSFPASAHKEDAHLRPRAGAARARPPPAPPGMFSYRREGGQTASAPPGPRLRAATARSLAHASVWGCLATVSTHKKIQGLPFGNCLPVSDGPFNNSTGIPFFYMTAKDPVVADLMKNPMASLMLPESEGEFCRKNIVDPEDPRCVQLTLTGQMIAVSPEEVEFAKQAMFSRHPGMRKWPRQYEWFFMKMRIEHIWLQKWYGGASSISREEYFKAVPRKA</sequence>
<proteinExistence type="evidence at protein level"/>
<protein>
    <recommendedName>
        <fullName>Protein CREG2</fullName>
    </recommendedName>
    <alternativeName>
        <fullName evidence="5">Cellular repressor of E1A-stimulated genes 2</fullName>
    </alternativeName>
</protein>
<gene>
    <name type="primary">CREG2</name>
</gene>
<evidence type="ECO:0000255" key="1"/>
<evidence type="ECO:0000269" key="2">
    <source>
    </source>
</evidence>
<evidence type="ECO:0000269" key="3">
    <source>
    </source>
</evidence>
<evidence type="ECO:0000269" key="4">
    <source>
    </source>
</evidence>
<evidence type="ECO:0000303" key="5">
    <source>
    </source>
</evidence>
<evidence type="ECO:0000305" key="6"/>
<evidence type="ECO:0000305" key="7">
    <source>
    </source>
</evidence>
<feature type="signal peptide" evidence="1">
    <location>
        <begin position="1"/>
        <end position="31"/>
    </location>
</feature>
<feature type="chain" id="PRO_0000006206" description="Protein CREG2">
    <location>
        <begin position="32"/>
        <end position="290"/>
    </location>
</feature>
<feature type="glycosylation site" description="N-linked (GlcNAc...) asparagine" evidence="7">
    <location>
        <position position="165"/>
    </location>
</feature>
<feature type="glycosylation site" description="N-linked (GlcNAc...) asparagine" evidence="7">
    <location>
        <position position="166"/>
    </location>
</feature>
<feature type="sequence variant" id="VAR_021252" description="In dbSNP:rs11554173." evidence="3 4">
    <original>P</original>
    <variation>Q</variation>
    <location>
        <position position="96"/>
    </location>
</feature>
<feature type="mutagenesis site" description="Abolishes N-glycosylation." evidence="2">
    <original>NN</original>
    <variation>QQ</variation>
    <location>
        <begin position="165"/>
        <end position="166"/>
    </location>
</feature>
<organism>
    <name type="scientific">Homo sapiens</name>
    <name type="common">Human</name>
    <dbReference type="NCBI Taxonomy" id="9606"/>
    <lineage>
        <taxon>Eukaryota</taxon>
        <taxon>Metazoa</taxon>
        <taxon>Chordata</taxon>
        <taxon>Craniata</taxon>
        <taxon>Vertebrata</taxon>
        <taxon>Euteleostomi</taxon>
        <taxon>Mammalia</taxon>
        <taxon>Eutheria</taxon>
        <taxon>Euarchontoglires</taxon>
        <taxon>Primates</taxon>
        <taxon>Haplorrhini</taxon>
        <taxon>Catarrhini</taxon>
        <taxon>Hominidae</taxon>
        <taxon>Homo</taxon>
    </lineage>
</organism>
<name>CREG2_HUMAN</name>
<accession>Q8IUH2</accession>
<accession>Q86X03</accession>
<accession>Q8N540</accession>
<accession>Q8N9E3</accession>
<comment type="subcellular location">
    <subcellularLocation>
        <location evidence="2">Secreted</location>
    </subcellularLocation>
</comment>
<comment type="tissue specificity">
    <text evidence="2">Brain specific mainly in the limbic system and faintly in the spinal cord but not in cerebellum.</text>
</comment>
<comment type="PTM">
    <text evidence="2">It is not sure whether N-glycosylation is on Asn-165 and/or Asn-166.</text>
</comment>
<comment type="similarity">
    <text evidence="6">Belongs to the CREG family.</text>
</comment>
<comment type="sequence caution" evidence="6">
    <conflict type="erroneous initiation">
        <sequence resource="EMBL-CDS" id="BAC04464"/>
    </conflict>
</comment>